<dbReference type="EC" id="6.1.1.15" evidence="1"/>
<dbReference type="EMBL" id="AP008957">
    <property type="protein sequence ID" value="BAH33323.1"/>
    <property type="molecule type" value="Genomic_DNA"/>
</dbReference>
<dbReference type="RefSeq" id="WP_020907423.1">
    <property type="nucleotide sequence ID" value="NC_012490.1"/>
</dbReference>
<dbReference type="SMR" id="C0ZY88"/>
<dbReference type="KEGG" id="rer:RER_26150"/>
<dbReference type="PATRIC" id="fig|234621.6.peg.3103"/>
<dbReference type="eggNOG" id="COG0442">
    <property type="taxonomic scope" value="Bacteria"/>
</dbReference>
<dbReference type="HOGENOM" id="CLU_016739_0_0_11"/>
<dbReference type="Proteomes" id="UP000002204">
    <property type="component" value="Chromosome"/>
</dbReference>
<dbReference type="GO" id="GO:0005829">
    <property type="term" value="C:cytosol"/>
    <property type="evidence" value="ECO:0007669"/>
    <property type="project" value="TreeGrafter"/>
</dbReference>
<dbReference type="GO" id="GO:0002161">
    <property type="term" value="F:aminoacyl-tRNA deacylase activity"/>
    <property type="evidence" value="ECO:0007669"/>
    <property type="project" value="InterPro"/>
</dbReference>
<dbReference type="GO" id="GO:0005524">
    <property type="term" value="F:ATP binding"/>
    <property type="evidence" value="ECO:0007669"/>
    <property type="project" value="UniProtKB-UniRule"/>
</dbReference>
<dbReference type="GO" id="GO:0004827">
    <property type="term" value="F:proline-tRNA ligase activity"/>
    <property type="evidence" value="ECO:0007669"/>
    <property type="project" value="UniProtKB-UniRule"/>
</dbReference>
<dbReference type="GO" id="GO:0006433">
    <property type="term" value="P:prolyl-tRNA aminoacylation"/>
    <property type="evidence" value="ECO:0007669"/>
    <property type="project" value="UniProtKB-UniRule"/>
</dbReference>
<dbReference type="CDD" id="cd00861">
    <property type="entry name" value="ProRS_anticodon_short"/>
    <property type="match status" value="1"/>
</dbReference>
<dbReference type="FunFam" id="3.30.930.10:FF:000065">
    <property type="entry name" value="Proline--tRNA ligase"/>
    <property type="match status" value="1"/>
</dbReference>
<dbReference type="FunFam" id="3.30.930.10:FF:000070">
    <property type="entry name" value="Proline--tRNA ligase"/>
    <property type="match status" value="1"/>
</dbReference>
<dbReference type="Gene3D" id="3.40.50.800">
    <property type="entry name" value="Anticodon-binding domain"/>
    <property type="match status" value="1"/>
</dbReference>
<dbReference type="Gene3D" id="3.30.930.10">
    <property type="entry name" value="Bira Bifunctional Protein, Domain 2"/>
    <property type="match status" value="2"/>
</dbReference>
<dbReference type="Gene3D" id="3.90.960.10">
    <property type="entry name" value="YbaK/aminoacyl-tRNA synthetase-associated domain"/>
    <property type="match status" value="1"/>
</dbReference>
<dbReference type="HAMAP" id="MF_01569">
    <property type="entry name" value="Pro_tRNA_synth_type1"/>
    <property type="match status" value="1"/>
</dbReference>
<dbReference type="InterPro" id="IPR002314">
    <property type="entry name" value="aa-tRNA-synt_IIb"/>
</dbReference>
<dbReference type="InterPro" id="IPR006195">
    <property type="entry name" value="aa-tRNA-synth_II"/>
</dbReference>
<dbReference type="InterPro" id="IPR045864">
    <property type="entry name" value="aa-tRNA-synth_II/BPL/LPL"/>
</dbReference>
<dbReference type="InterPro" id="IPR004154">
    <property type="entry name" value="Anticodon-bd"/>
</dbReference>
<dbReference type="InterPro" id="IPR036621">
    <property type="entry name" value="Anticodon-bd_dom_sf"/>
</dbReference>
<dbReference type="InterPro" id="IPR002316">
    <property type="entry name" value="Pro-tRNA-ligase_IIa"/>
</dbReference>
<dbReference type="InterPro" id="IPR004500">
    <property type="entry name" value="Pro-tRNA-synth_IIa_bac-type"/>
</dbReference>
<dbReference type="InterPro" id="IPR023717">
    <property type="entry name" value="Pro-tRNA-Synthase_IIa_type1"/>
</dbReference>
<dbReference type="InterPro" id="IPR050062">
    <property type="entry name" value="Pro-tRNA_synthetase"/>
</dbReference>
<dbReference type="InterPro" id="IPR044140">
    <property type="entry name" value="ProRS_anticodon_short"/>
</dbReference>
<dbReference type="InterPro" id="IPR036754">
    <property type="entry name" value="YbaK/aa-tRNA-synt-asso_dom_sf"/>
</dbReference>
<dbReference type="InterPro" id="IPR007214">
    <property type="entry name" value="YbaK/aa-tRNA-synth-assoc-dom"/>
</dbReference>
<dbReference type="NCBIfam" id="NF006625">
    <property type="entry name" value="PRK09194.1"/>
    <property type="match status" value="1"/>
</dbReference>
<dbReference type="NCBIfam" id="TIGR00409">
    <property type="entry name" value="proS_fam_II"/>
    <property type="match status" value="1"/>
</dbReference>
<dbReference type="PANTHER" id="PTHR42753">
    <property type="entry name" value="MITOCHONDRIAL RIBOSOME PROTEIN L39/PROLYL-TRNA LIGASE FAMILY MEMBER"/>
    <property type="match status" value="1"/>
</dbReference>
<dbReference type="PANTHER" id="PTHR42753:SF2">
    <property type="entry name" value="PROLINE--TRNA LIGASE"/>
    <property type="match status" value="1"/>
</dbReference>
<dbReference type="Pfam" id="PF03129">
    <property type="entry name" value="HGTP_anticodon"/>
    <property type="match status" value="1"/>
</dbReference>
<dbReference type="Pfam" id="PF00587">
    <property type="entry name" value="tRNA-synt_2b"/>
    <property type="match status" value="1"/>
</dbReference>
<dbReference type="Pfam" id="PF04073">
    <property type="entry name" value="tRNA_edit"/>
    <property type="match status" value="1"/>
</dbReference>
<dbReference type="PRINTS" id="PR01046">
    <property type="entry name" value="TRNASYNTHPRO"/>
</dbReference>
<dbReference type="SUPFAM" id="SSF52954">
    <property type="entry name" value="Class II aaRS ABD-related"/>
    <property type="match status" value="1"/>
</dbReference>
<dbReference type="SUPFAM" id="SSF55681">
    <property type="entry name" value="Class II aaRS and biotin synthetases"/>
    <property type="match status" value="1"/>
</dbReference>
<dbReference type="SUPFAM" id="SSF55826">
    <property type="entry name" value="YbaK/ProRS associated domain"/>
    <property type="match status" value="1"/>
</dbReference>
<dbReference type="PROSITE" id="PS50862">
    <property type="entry name" value="AA_TRNA_LIGASE_II"/>
    <property type="match status" value="1"/>
</dbReference>
<comment type="function">
    <text evidence="1">Catalyzes the attachment of proline to tRNA(Pro) in a two-step reaction: proline is first activated by ATP to form Pro-AMP and then transferred to the acceptor end of tRNA(Pro). As ProRS can inadvertently accommodate and process non-cognate amino acids such as alanine and cysteine, to avoid such errors it has two additional distinct editing activities against alanine. One activity is designated as 'pretransfer' editing and involves the tRNA(Pro)-independent hydrolysis of activated Ala-AMP. The other activity is designated 'posttransfer' editing and involves deacylation of mischarged Ala-tRNA(Pro). The misacylated Cys-tRNA(Pro) is not edited by ProRS.</text>
</comment>
<comment type="catalytic activity">
    <reaction evidence="1">
        <text>tRNA(Pro) + L-proline + ATP = L-prolyl-tRNA(Pro) + AMP + diphosphate</text>
        <dbReference type="Rhea" id="RHEA:14305"/>
        <dbReference type="Rhea" id="RHEA-COMP:9700"/>
        <dbReference type="Rhea" id="RHEA-COMP:9702"/>
        <dbReference type="ChEBI" id="CHEBI:30616"/>
        <dbReference type="ChEBI" id="CHEBI:33019"/>
        <dbReference type="ChEBI" id="CHEBI:60039"/>
        <dbReference type="ChEBI" id="CHEBI:78442"/>
        <dbReference type="ChEBI" id="CHEBI:78532"/>
        <dbReference type="ChEBI" id="CHEBI:456215"/>
        <dbReference type="EC" id="6.1.1.15"/>
    </reaction>
</comment>
<comment type="subunit">
    <text evidence="1">Homodimer.</text>
</comment>
<comment type="subcellular location">
    <subcellularLocation>
        <location evidence="1">Cytoplasm</location>
    </subcellularLocation>
</comment>
<comment type="domain">
    <text evidence="1">Consists of three domains: the N-terminal catalytic domain, the editing domain and the C-terminal anticodon-binding domain.</text>
</comment>
<comment type="similarity">
    <text evidence="1">Belongs to the class-II aminoacyl-tRNA synthetase family. ProS type 1 subfamily.</text>
</comment>
<evidence type="ECO:0000255" key="1">
    <source>
        <dbReference type="HAMAP-Rule" id="MF_01569"/>
    </source>
</evidence>
<sequence length="581" mass="63723">MITRLSHLFLRTLRDDPSDAEVASHKLLVRAGYVRRIAPGVYSWLPLGLRVLREVERVVREEMNAIGGQEILLPALLPRDPYEASNRWTEYGPNLFRLKDRKGNDYMLGPTHEELFALTVKGEYNSYKDFPVTLYQVQTKYRDEERPRAGILRGREFLMKDSYSFDLSDEGLTESYQAHRGAYEKIFTRLGVKYVIVSATSGAMGGSASEEFLAESEIGEDTYVRCLESGYAANVEAVKTVVPDSIPFDGLPEAKVYDTANTPTIDTLVDWANGADLGRTITAADTLKNIMVKTRLPGGEWELLGIGIPGDREVDEKRLEASLEPAEFVMITETDFKNNPFLAKGYIGPKALQANGVRYLVDPRVVDGTSWITGADEDGKHVVGLVAGRDFTPDGTIEAAEVRDGDASPDGAGTLVSARGIEIGHVFQLGRKYTDVFTVDVLAENGKPVRPTMGSYGVGVSRLVAVIAEQHHDEKGLRWPAEVSPADVYLVIANKDETAREGAEGLAAQLDRAGLEVILDDRKASPGVKFKDSELIGVPLIVVVGRGWADGKVEIRDRFTGESREIDADSAIEAIISAVRG</sequence>
<gene>
    <name evidence="1" type="primary">proS</name>
    <name type="ordered locus">RER_26150</name>
</gene>
<organism>
    <name type="scientific">Rhodococcus erythropolis (strain PR4 / NBRC 100887)</name>
    <dbReference type="NCBI Taxonomy" id="234621"/>
    <lineage>
        <taxon>Bacteria</taxon>
        <taxon>Bacillati</taxon>
        <taxon>Actinomycetota</taxon>
        <taxon>Actinomycetes</taxon>
        <taxon>Mycobacteriales</taxon>
        <taxon>Nocardiaceae</taxon>
        <taxon>Rhodococcus</taxon>
        <taxon>Rhodococcus erythropolis group</taxon>
    </lineage>
</organism>
<keyword id="KW-0030">Aminoacyl-tRNA synthetase</keyword>
<keyword id="KW-0067">ATP-binding</keyword>
<keyword id="KW-0963">Cytoplasm</keyword>
<keyword id="KW-0436">Ligase</keyword>
<keyword id="KW-0547">Nucleotide-binding</keyword>
<keyword id="KW-0648">Protein biosynthesis</keyword>
<feature type="chain" id="PRO_1000215536" description="Proline--tRNA ligase">
    <location>
        <begin position="1"/>
        <end position="581"/>
    </location>
</feature>
<reference key="1">
    <citation type="submission" date="2005-03" db="EMBL/GenBank/DDBJ databases">
        <title>Comparison of the complete genome sequences of Rhodococcus erythropolis PR4 and Rhodococcus opacus B4.</title>
        <authorList>
            <person name="Takarada H."/>
            <person name="Sekine M."/>
            <person name="Hosoyama A."/>
            <person name="Yamada R."/>
            <person name="Fujisawa T."/>
            <person name="Omata S."/>
            <person name="Shimizu A."/>
            <person name="Tsukatani N."/>
            <person name="Tanikawa S."/>
            <person name="Fujita N."/>
            <person name="Harayama S."/>
        </authorList>
    </citation>
    <scope>NUCLEOTIDE SEQUENCE [LARGE SCALE GENOMIC DNA]</scope>
    <source>
        <strain>PR4 / NBRC 100887</strain>
    </source>
</reference>
<name>SYP_RHOE4</name>
<proteinExistence type="inferred from homology"/>
<accession>C0ZY88</accession>
<protein>
    <recommendedName>
        <fullName evidence="1">Proline--tRNA ligase</fullName>
        <ecNumber evidence="1">6.1.1.15</ecNumber>
    </recommendedName>
    <alternativeName>
        <fullName evidence="1">Prolyl-tRNA synthetase</fullName>
        <shortName evidence="1">ProRS</shortName>
    </alternativeName>
</protein>